<keyword id="KW-0927">Auxin signaling pathway</keyword>
<keyword id="KW-0256">Endoplasmic reticulum</keyword>
<keyword id="KW-0472">Membrane</keyword>
<keyword id="KW-1185">Reference proteome</keyword>
<keyword id="KW-0812">Transmembrane</keyword>
<keyword id="KW-1133">Transmembrane helix</keyword>
<keyword id="KW-0813">Transport</keyword>
<comment type="function">
    <text evidence="5">Involved in cellular auxin homeostasis by regulating auxin metabolism. Regulates intracellular auxin accumulation at the endoplasmic reticulum and thus auxin availability for nuclear auxin signaling.</text>
</comment>
<comment type="subcellular location">
    <subcellularLocation>
        <location evidence="5">Endoplasmic reticulum membrane</location>
        <topology evidence="1">Multi-pass membrane protein</topology>
    </subcellularLocation>
</comment>
<comment type="tissue specificity">
    <text evidence="2">Expressed in seedlings, rosette and cauline leaves, stems, flowers and siliques.</text>
</comment>
<comment type="induction">
    <text evidence="2">Up-regulated by auxin application.</text>
</comment>
<comment type="similarity">
    <text evidence="4">Belongs to the auxin efflux carrier (TC 2.A.69.2) family.</text>
</comment>
<reference key="1">
    <citation type="journal article" date="2000" name="Nature">
        <title>Sequence and analysis of chromosome 1 of the plant Arabidopsis thaliana.</title>
        <authorList>
            <person name="Theologis A."/>
            <person name="Ecker J.R."/>
            <person name="Palm C.J."/>
            <person name="Federspiel N.A."/>
            <person name="Kaul S."/>
            <person name="White O."/>
            <person name="Alonso J."/>
            <person name="Altafi H."/>
            <person name="Araujo R."/>
            <person name="Bowman C.L."/>
            <person name="Brooks S.Y."/>
            <person name="Buehler E."/>
            <person name="Chan A."/>
            <person name="Chao Q."/>
            <person name="Chen H."/>
            <person name="Cheuk R.F."/>
            <person name="Chin C.W."/>
            <person name="Chung M.K."/>
            <person name="Conn L."/>
            <person name="Conway A.B."/>
            <person name="Conway A.R."/>
            <person name="Creasy T.H."/>
            <person name="Dewar K."/>
            <person name="Dunn P."/>
            <person name="Etgu P."/>
            <person name="Feldblyum T.V."/>
            <person name="Feng J.-D."/>
            <person name="Fong B."/>
            <person name="Fujii C.Y."/>
            <person name="Gill J.E."/>
            <person name="Goldsmith A.D."/>
            <person name="Haas B."/>
            <person name="Hansen N.F."/>
            <person name="Hughes B."/>
            <person name="Huizar L."/>
            <person name="Hunter J.L."/>
            <person name="Jenkins J."/>
            <person name="Johnson-Hopson C."/>
            <person name="Khan S."/>
            <person name="Khaykin E."/>
            <person name="Kim C.J."/>
            <person name="Koo H.L."/>
            <person name="Kremenetskaia I."/>
            <person name="Kurtz D.B."/>
            <person name="Kwan A."/>
            <person name="Lam B."/>
            <person name="Langin-Hooper S."/>
            <person name="Lee A."/>
            <person name="Lee J.M."/>
            <person name="Lenz C.A."/>
            <person name="Li J.H."/>
            <person name="Li Y.-P."/>
            <person name="Lin X."/>
            <person name="Liu S.X."/>
            <person name="Liu Z.A."/>
            <person name="Luros J.S."/>
            <person name="Maiti R."/>
            <person name="Marziali A."/>
            <person name="Militscher J."/>
            <person name="Miranda M."/>
            <person name="Nguyen M."/>
            <person name="Nierman W.C."/>
            <person name="Osborne B.I."/>
            <person name="Pai G."/>
            <person name="Peterson J."/>
            <person name="Pham P.K."/>
            <person name="Rizzo M."/>
            <person name="Rooney T."/>
            <person name="Rowley D."/>
            <person name="Sakano H."/>
            <person name="Salzberg S.L."/>
            <person name="Schwartz J.R."/>
            <person name="Shinn P."/>
            <person name="Southwick A.M."/>
            <person name="Sun H."/>
            <person name="Tallon L.J."/>
            <person name="Tambunga G."/>
            <person name="Toriumi M.J."/>
            <person name="Town C.D."/>
            <person name="Utterback T."/>
            <person name="Van Aken S."/>
            <person name="Vaysberg M."/>
            <person name="Vysotskaia V.S."/>
            <person name="Walker M."/>
            <person name="Wu D."/>
            <person name="Yu G."/>
            <person name="Fraser C.M."/>
            <person name="Venter J.C."/>
            <person name="Davis R.W."/>
        </authorList>
    </citation>
    <scope>NUCLEOTIDE SEQUENCE [LARGE SCALE GENOMIC DNA]</scope>
    <source>
        <strain>cv. Columbia</strain>
    </source>
</reference>
<reference key="2">
    <citation type="journal article" date="2017" name="Plant J.">
        <title>Araport11: a complete reannotation of the Arabidopsis thaliana reference genome.</title>
        <authorList>
            <person name="Cheng C.Y."/>
            <person name="Krishnakumar V."/>
            <person name="Chan A.P."/>
            <person name="Thibaud-Nissen F."/>
            <person name="Schobel S."/>
            <person name="Town C.D."/>
        </authorList>
    </citation>
    <scope>GENOME REANNOTATION</scope>
    <source>
        <strain>cv. Columbia</strain>
    </source>
</reference>
<reference key="3">
    <citation type="journal article" date="2012" name="Nature">
        <title>A novel putative auxin carrier family regulates intracellular auxin homeostasis in plants.</title>
        <authorList>
            <person name="Barbez E."/>
            <person name="Kubes M."/>
            <person name="Rolcik J."/>
            <person name="Beziat C."/>
            <person name="Pencik A."/>
            <person name="Wang B."/>
            <person name="Rosquete M.R."/>
            <person name="Zhu J."/>
            <person name="Dobrev P.I."/>
            <person name="Lee Y."/>
            <person name="Zazimalova E."/>
            <person name="Petrasek J."/>
            <person name="Geisler M."/>
            <person name="Friml J."/>
            <person name="Kleine-Vehn J."/>
        </authorList>
    </citation>
    <scope>SUBCELLULAR LOCATION</scope>
    <scope>TISSUE SPECIFICITY</scope>
    <scope>INDUCTION BY AUXIN</scope>
    <scope>GENE FAMILY</scope>
    <scope>NOMENCLATURE</scope>
</reference>
<reference key="4">
    <citation type="journal article" date="2012" name="Front. Plant Sci.">
        <title>Evolution and structural diversification of PILS putative auxin carriers in plants.</title>
        <authorList>
            <person name="Feraru E."/>
            <person name="Vosolsobe S."/>
            <person name="Feraru M.I."/>
            <person name="Petrasek J."/>
            <person name="Kleine-Vehn J."/>
        </authorList>
    </citation>
    <scope>GENE FAMILY</scope>
    <scope>NOMENCLATURE</scope>
</reference>
<protein>
    <recommendedName>
        <fullName evidence="3">Protein PIN-LIKES 4</fullName>
    </recommendedName>
    <alternativeName>
        <fullName evidence="3">Auxin efflux carrier-like protein 4</fullName>
    </alternativeName>
</protein>
<feature type="chain" id="PRO_0000436499" description="Protein PIN-LIKES 4">
    <location>
        <begin position="1"/>
        <end position="415"/>
    </location>
</feature>
<feature type="topological domain" description="Lumenal" evidence="6">
    <location>
        <begin position="1"/>
        <end position="13"/>
    </location>
</feature>
<feature type="transmembrane region" description="Helical" evidence="1">
    <location>
        <begin position="14"/>
        <end position="34"/>
    </location>
</feature>
<feature type="topological domain" description="Cytoplasmic" evidence="6">
    <location>
        <begin position="35"/>
        <end position="44"/>
    </location>
</feature>
<feature type="transmembrane region" description="Helical" evidence="1">
    <location>
        <begin position="45"/>
        <end position="61"/>
    </location>
</feature>
<feature type="topological domain" description="Lumenal" evidence="6">
    <location>
        <begin position="62"/>
        <end position="75"/>
    </location>
</feature>
<feature type="transmembrane region" description="Helical" evidence="1">
    <location>
        <begin position="76"/>
        <end position="96"/>
    </location>
</feature>
<feature type="topological domain" description="Cytoplasmic" evidence="6">
    <location>
        <begin position="97"/>
        <end position="106"/>
    </location>
</feature>
<feature type="transmembrane region" description="Helical" evidence="1">
    <location>
        <begin position="107"/>
        <end position="127"/>
    </location>
</feature>
<feature type="topological domain" description="Lumenal" evidence="6">
    <location>
        <begin position="128"/>
        <end position="143"/>
    </location>
</feature>
<feature type="transmembrane region" description="Helical" evidence="1">
    <location>
        <begin position="144"/>
        <end position="161"/>
    </location>
</feature>
<feature type="topological domain" description="Cytoplasmic" evidence="6">
    <location>
        <begin position="162"/>
        <end position="244"/>
    </location>
</feature>
<feature type="transmembrane region" description="Helical" evidence="1">
    <location>
        <begin position="245"/>
        <end position="265"/>
    </location>
</feature>
<feature type="topological domain" description="Lumenal" evidence="6">
    <location>
        <begin position="266"/>
        <end position="285"/>
    </location>
</feature>
<feature type="transmembrane region" description="Helical" evidence="1">
    <location>
        <begin position="286"/>
        <end position="306"/>
    </location>
</feature>
<feature type="topological domain" description="Cytoplasmic" evidence="6">
    <location>
        <begin position="307"/>
        <end position="322"/>
    </location>
</feature>
<feature type="transmembrane region" description="Helical" evidence="1">
    <location>
        <begin position="323"/>
        <end position="343"/>
    </location>
</feature>
<feature type="topological domain" description="Lumenal" evidence="6">
    <location>
        <begin position="344"/>
        <end position="355"/>
    </location>
</feature>
<feature type="transmembrane region" description="Helical" evidence="1">
    <location>
        <begin position="356"/>
        <end position="376"/>
    </location>
</feature>
<feature type="topological domain" description="Cytoplasmic" evidence="6">
    <location>
        <begin position="377"/>
        <end position="389"/>
    </location>
</feature>
<feature type="transmembrane region" description="Helical" evidence="1">
    <location>
        <begin position="390"/>
        <end position="410"/>
    </location>
</feature>
<feature type="topological domain" description="Lumenal" evidence="6">
    <location>
        <begin position="411"/>
        <end position="415"/>
    </location>
</feature>
<name>PILS4_ARATH</name>
<evidence type="ECO:0000255" key="1"/>
<evidence type="ECO:0000269" key="2">
    <source>
    </source>
</evidence>
<evidence type="ECO:0000303" key="3">
    <source>
    </source>
</evidence>
<evidence type="ECO:0000305" key="4"/>
<evidence type="ECO:0000305" key="5">
    <source>
    </source>
</evidence>
<evidence type="ECO:0000305" key="6">
    <source>
    </source>
</evidence>
<evidence type="ECO:0000312" key="7">
    <source>
        <dbReference type="Araport" id="AT1G76530"/>
    </source>
</evidence>
<evidence type="ECO:0000312" key="8">
    <source>
        <dbReference type="EMBL" id="AAG51958.1"/>
    </source>
</evidence>
<organism>
    <name type="scientific">Arabidopsis thaliana</name>
    <name type="common">Mouse-ear cress</name>
    <dbReference type="NCBI Taxonomy" id="3702"/>
    <lineage>
        <taxon>Eukaryota</taxon>
        <taxon>Viridiplantae</taxon>
        <taxon>Streptophyta</taxon>
        <taxon>Embryophyta</taxon>
        <taxon>Tracheophyta</taxon>
        <taxon>Spermatophyta</taxon>
        <taxon>Magnoliopsida</taxon>
        <taxon>eudicotyledons</taxon>
        <taxon>Gunneridae</taxon>
        <taxon>Pentapetalae</taxon>
        <taxon>rosids</taxon>
        <taxon>malvids</taxon>
        <taxon>Brassicales</taxon>
        <taxon>Brassicaceae</taxon>
        <taxon>Camelineae</taxon>
        <taxon>Arabidopsis</taxon>
    </lineage>
</organism>
<sequence length="415" mass="45586">MKLLELFIASSKPVVETLLITSVGFYLALDTVNLLGHDARKHLNNIVFYVFSPSLIGSRLADSVTYESLVKMWFMPVNVLLTFMIGSLLGWIVIVITKPPSQLRGLIISCCASGNLGTMPLIIIPAICKEKGGPFGDSESCEKYGMGYVTLSMTAFFISVYKHDTNWYVSGGNGLLMDLYINLMRVLSNSPVETHTHSIESNYDDSCKVQLISSKEEEKEEDNHQVGRWEEVKQRVVSLSKKVNLGSIFAPATIAAIIALVIGLITPLRNLIIGTVAPFRVIQDSLTLLGDGAIPAMTLILGGNLLKGMRRSEVRSSEMKNSCIIGVLVARYILLPVSGVLLVRGAYKLDLVTSEPLYQFVLLLQYAVPPAMNLGTKTQLFGAGESECSVIMLWTYSLAAVSLTVWPTFFMWLVT</sequence>
<accession>Q9C9K4</accession>
<gene>
    <name evidence="3" type="primary">PILS4</name>
    <name evidence="7" type="ordered locus">At1g76530</name>
    <name evidence="8" type="ORF">F14G6.13</name>
</gene>
<dbReference type="EMBL" id="AC015450">
    <property type="protein sequence ID" value="AAG51958.1"/>
    <property type="molecule type" value="Genomic_DNA"/>
</dbReference>
<dbReference type="EMBL" id="CP002684">
    <property type="protein sequence ID" value="AEE35856.1"/>
    <property type="molecule type" value="Genomic_DNA"/>
</dbReference>
<dbReference type="EMBL" id="CP002684">
    <property type="protein sequence ID" value="ANM58623.1"/>
    <property type="molecule type" value="Genomic_DNA"/>
</dbReference>
<dbReference type="PIR" id="C96793">
    <property type="entry name" value="C96793"/>
</dbReference>
<dbReference type="RefSeq" id="NP_001319388.1">
    <property type="nucleotide sequence ID" value="NM_001334730.1"/>
</dbReference>
<dbReference type="RefSeq" id="NP_001321045.1">
    <property type="nucleotide sequence ID" value="NM_001334731.1"/>
</dbReference>
<dbReference type="FunCoup" id="Q9C9K4">
    <property type="interactions" value="97"/>
</dbReference>
<dbReference type="STRING" id="3702.Q9C9K4"/>
<dbReference type="PaxDb" id="3702-AT1G76530.1"/>
<dbReference type="EnsemblPlants" id="AT1G76530.1">
    <property type="protein sequence ID" value="AT1G76530.1"/>
    <property type="gene ID" value="AT1G76530"/>
</dbReference>
<dbReference type="EnsemblPlants" id="AT1G76530.2">
    <property type="protein sequence ID" value="AT1G76530.2"/>
    <property type="gene ID" value="AT1G76530"/>
</dbReference>
<dbReference type="GeneID" id="843986"/>
<dbReference type="Gramene" id="AT1G76530.1">
    <property type="protein sequence ID" value="AT1G76530.1"/>
    <property type="gene ID" value="AT1G76530"/>
</dbReference>
<dbReference type="Gramene" id="AT1G76530.2">
    <property type="protein sequence ID" value="AT1G76530.2"/>
    <property type="gene ID" value="AT1G76530"/>
</dbReference>
<dbReference type="KEGG" id="ath:AT1G76530"/>
<dbReference type="Araport" id="AT1G76530"/>
<dbReference type="TAIR" id="AT1G76530">
    <property type="gene designation" value="PILS4"/>
</dbReference>
<dbReference type="eggNOG" id="KOG2722">
    <property type="taxonomic scope" value="Eukaryota"/>
</dbReference>
<dbReference type="HOGENOM" id="CLU_044945_0_0_1"/>
<dbReference type="InParanoid" id="Q9C9K4"/>
<dbReference type="OMA" id="WDRIKRR"/>
<dbReference type="PhylomeDB" id="Q9C9K4"/>
<dbReference type="PRO" id="PR:Q9C9K4"/>
<dbReference type="Proteomes" id="UP000006548">
    <property type="component" value="Chromosome 1"/>
</dbReference>
<dbReference type="ExpressionAtlas" id="Q9C9K4">
    <property type="expression patterns" value="baseline and differential"/>
</dbReference>
<dbReference type="GO" id="GO:0005789">
    <property type="term" value="C:endoplasmic reticulum membrane"/>
    <property type="evidence" value="ECO:0007669"/>
    <property type="project" value="UniProtKB-SubCell"/>
</dbReference>
<dbReference type="GO" id="GO:0009734">
    <property type="term" value="P:auxin-activated signaling pathway"/>
    <property type="evidence" value="ECO:0007669"/>
    <property type="project" value="UniProtKB-KW"/>
</dbReference>
<dbReference type="GO" id="GO:0080162">
    <property type="term" value="P:endoplasmic reticulum to cytosol auxin transport"/>
    <property type="evidence" value="ECO:0007669"/>
    <property type="project" value="InterPro"/>
</dbReference>
<dbReference type="GO" id="GO:0009733">
    <property type="term" value="P:response to auxin"/>
    <property type="evidence" value="ECO:0000270"/>
    <property type="project" value="UniProtKB"/>
</dbReference>
<dbReference type="InterPro" id="IPR004776">
    <property type="entry name" value="Mem_transp_PIN-like"/>
</dbReference>
<dbReference type="InterPro" id="IPR045033">
    <property type="entry name" value="PILS1/3/4/5/7"/>
</dbReference>
<dbReference type="PANTHER" id="PTHR31651">
    <property type="match status" value="1"/>
</dbReference>
<dbReference type="PANTHER" id="PTHR31651:SF45">
    <property type="entry name" value="PROTEIN PIN-LIKES 4"/>
    <property type="match status" value="1"/>
</dbReference>
<dbReference type="Pfam" id="PF03547">
    <property type="entry name" value="Mem_trans"/>
    <property type="match status" value="1"/>
</dbReference>
<proteinExistence type="evidence at transcript level"/>